<feature type="chain" id="PRO_0000053717" description="Nuclear receptor subfamily 4 group A member 1">
    <location>
        <begin position="1"/>
        <end position="597"/>
    </location>
</feature>
<feature type="domain" description="NR LBD" evidence="5">
    <location>
        <begin position="359"/>
        <end position="594"/>
    </location>
</feature>
<feature type="DNA-binding region" description="Nuclear receptor" evidence="4">
    <location>
        <begin position="263"/>
        <end position="338"/>
    </location>
</feature>
<feature type="zinc finger region" description="NR C4-type" evidence="4">
    <location>
        <begin position="266"/>
        <end position="286"/>
    </location>
</feature>
<feature type="zinc finger region" description="NR C4-type" evidence="4">
    <location>
        <begin position="302"/>
        <end position="326"/>
    </location>
</feature>
<feature type="region of interest" description="Disordered" evidence="6">
    <location>
        <begin position="1"/>
        <end position="22"/>
    </location>
</feature>
<feature type="region of interest" description="Required for nuclear import" evidence="3">
    <location>
        <begin position="170"/>
        <end position="465"/>
    </location>
</feature>
<feature type="region of interest" description="Required for binding NBRE-containing DNA" evidence="2">
    <location>
        <begin position="267"/>
        <end position="353"/>
    </location>
</feature>
<feature type="region of interest" description="Required for the interaction with RXRA" evidence="3">
    <location>
        <begin position="298"/>
        <end position="360"/>
    </location>
</feature>
<feature type="region of interest" description="Disordered" evidence="6">
    <location>
        <begin position="341"/>
        <end position="360"/>
    </location>
</feature>
<feature type="region of interest" description="Binds lipopolysaccharide" evidence="2">
    <location>
        <begin position="520"/>
        <end position="543"/>
    </location>
</feature>
<feature type="region of interest" description="AF-2" evidence="5">
    <location>
        <begin position="583"/>
        <end position="594"/>
    </location>
</feature>
<feature type="modified residue" description="Phosphoserine; by PKA" evidence="8">
    <location>
        <position position="340"/>
    </location>
</feature>
<feature type="modified residue" description="Phosphoserine; by PKA, RPS6KA1 and RPS6KA3" evidence="8">
    <location>
        <position position="350"/>
    </location>
</feature>
<feature type="mutagenesis site" description="Loss of phosphorylation." evidence="8">
    <original>S</original>
    <variation>A</variation>
    <location>
        <position position="340"/>
    </location>
</feature>
<feature type="mutagenesis site" description="Decreased NBRE binding." evidence="8">
    <original>R</original>
    <variation>K</variation>
    <location>
        <position position="345"/>
    </location>
</feature>
<feature type="mutagenesis site" description="Almost complete loss of NBRE binding." evidence="8">
    <original>L</original>
    <variation>V</variation>
    <location>
        <position position="348"/>
    </location>
</feature>
<feature type="mutagenesis site" description="Loss of phosphorylation." evidence="8">
    <original>S</original>
    <variation>A</variation>
    <location>
        <position position="350"/>
    </location>
</feature>
<feature type="strand" evidence="14">
    <location>
        <begin position="267"/>
        <end position="269"/>
    </location>
</feature>
<feature type="strand" evidence="14">
    <location>
        <begin position="275"/>
        <end position="277"/>
    </location>
</feature>
<feature type="strand" evidence="14">
    <location>
        <begin position="280"/>
        <end position="282"/>
    </location>
</feature>
<feature type="helix" evidence="14">
    <location>
        <begin position="284"/>
        <end position="296"/>
    </location>
</feature>
<feature type="strand" evidence="14">
    <location>
        <begin position="303"/>
        <end position="306"/>
    </location>
</feature>
<feature type="turn" evidence="14">
    <location>
        <begin position="312"/>
        <end position="317"/>
    </location>
</feature>
<feature type="helix" evidence="14">
    <location>
        <begin position="319"/>
        <end position="328"/>
    </location>
</feature>
<feature type="helix" evidence="14">
    <location>
        <begin position="333"/>
        <end position="335"/>
    </location>
</feature>
<feature type="helix" evidence="14">
    <location>
        <begin position="339"/>
        <end position="341"/>
    </location>
</feature>
<feature type="helix" evidence="15">
    <location>
        <begin position="363"/>
        <end position="374"/>
    </location>
</feature>
<feature type="helix" evidence="15">
    <location>
        <begin position="378"/>
        <end position="380"/>
    </location>
</feature>
<feature type="helix" evidence="15">
    <location>
        <begin position="399"/>
        <end position="421"/>
    </location>
</feature>
<feature type="turn" evidence="15">
    <location>
        <begin position="424"/>
        <end position="428"/>
    </location>
</feature>
<feature type="helix" evidence="15">
    <location>
        <begin position="431"/>
        <end position="453"/>
    </location>
</feature>
<feature type="turn" evidence="15">
    <location>
        <begin position="456"/>
        <end position="459"/>
    </location>
</feature>
<feature type="strand" evidence="15">
    <location>
        <begin position="460"/>
        <end position="462"/>
    </location>
</feature>
<feature type="strand" evidence="15">
    <location>
        <begin position="466"/>
        <end position="470"/>
    </location>
</feature>
<feature type="helix" evidence="15">
    <location>
        <begin position="471"/>
        <end position="478"/>
    </location>
</feature>
<feature type="helix" evidence="15">
    <location>
        <begin position="481"/>
        <end position="495"/>
    </location>
</feature>
<feature type="helix" evidence="15">
    <location>
        <begin position="499"/>
        <end position="510"/>
    </location>
</feature>
<feature type="helix" evidence="15">
    <location>
        <begin position="520"/>
        <end position="540"/>
    </location>
</feature>
<feature type="helix" evidence="15">
    <location>
        <begin position="550"/>
        <end position="555"/>
    </location>
</feature>
<feature type="helix" evidence="15">
    <location>
        <begin position="558"/>
        <end position="578"/>
    </location>
</feature>
<feature type="helix" evidence="15">
    <location>
        <begin position="585"/>
        <end position="592"/>
    </location>
</feature>
<sequence length="597" mass="64282">MPCIQAQYGTPATSPGPRDHLTGDPLALEFSKPTMDLASPETAPTAPATLPSFSTFMDGGYTGEFDTFLYQLPGTAQPCSSASSTSSSSSSATSPASASFKFEDFQVYGCYPGTLSGPLDETLSSSGSDYYGSPCSAPSPPTPNFQPSQLSPWDGSFGHFSPSQTYEGLRVWTEQLPKASGPPPPPTFFSFSPPTGPSPSLAQSSLKLFPAPATHQLGEGESYSVPAAFPGLAPTSPNCDTSGILDAPVTSTKARSGSSGGSEGRCAVCGDNASCQHYGVRTCEGCKGFFKRTVQKSAKYICLANKDCPVDKRRRNRCQFCRFQKCLAVGMVKEVVRTDSLKGRRGRLPSKPKQPPDASPTNLLTSLIRAHLDSGPNTAKLDYSKFQELVLPRFGKEDAGDVQQFYDLLSGSLDVIRKWAEKIPGFIELSPGDQDLLLESAFLELFILRLAYRSKPGEGKLIFCSGLVLHRLQCARGFGDWIDNILAFSRSLHSLGVDVPAFACLSALVLITDRHGLQDPRRVEELQNRIASCLKEHMAAVAGDPQPASCLSRLLGKLPELRTLCTQGLQRIFCLKLEDLVPPPPIVDKIFMDTLSF</sequence>
<gene>
    <name type="primary">Nr4a1</name>
    <name type="synonym">Hmr</name>
    <name type="synonym">Ngfib</name>
</gene>
<proteinExistence type="evidence at protein level"/>
<organism>
    <name type="scientific">Rattus norvegicus</name>
    <name type="common">Rat</name>
    <dbReference type="NCBI Taxonomy" id="10116"/>
    <lineage>
        <taxon>Eukaryota</taxon>
        <taxon>Metazoa</taxon>
        <taxon>Chordata</taxon>
        <taxon>Craniata</taxon>
        <taxon>Vertebrata</taxon>
        <taxon>Euteleostomi</taxon>
        <taxon>Mammalia</taxon>
        <taxon>Eutheria</taxon>
        <taxon>Euarchontoglires</taxon>
        <taxon>Glires</taxon>
        <taxon>Rodentia</taxon>
        <taxon>Myomorpha</taxon>
        <taxon>Muroidea</taxon>
        <taxon>Muridae</taxon>
        <taxon>Murinae</taxon>
        <taxon>Rattus</taxon>
    </lineage>
</organism>
<dbReference type="EMBL" id="U17254">
    <property type="protein sequence ID" value="AAA56770.1"/>
    <property type="status" value="ALT_INIT"/>
    <property type="molecule type" value="mRNA"/>
</dbReference>
<dbReference type="EMBL" id="BC097313">
    <property type="protein sequence ID" value="AAH97313.2"/>
    <property type="status" value="ALT_INIT"/>
    <property type="molecule type" value="mRNA"/>
</dbReference>
<dbReference type="PIR" id="JQ0623">
    <property type="entry name" value="JQ0623"/>
</dbReference>
<dbReference type="RefSeq" id="NP_077364.2">
    <property type="nucleotide sequence ID" value="NM_024388.2"/>
</dbReference>
<dbReference type="RefSeq" id="XP_006242418.1">
    <property type="nucleotide sequence ID" value="XM_006242356.2"/>
</dbReference>
<dbReference type="RefSeq" id="XP_006242420.1">
    <property type="nucleotide sequence ID" value="XM_006242358.4"/>
</dbReference>
<dbReference type="RefSeq" id="XP_017450619.1">
    <property type="nucleotide sequence ID" value="XM_017595130.3"/>
</dbReference>
<dbReference type="RefSeq" id="XP_063120357.1">
    <property type="nucleotide sequence ID" value="XM_063264287.1"/>
</dbReference>
<dbReference type="PDB" id="1CIT">
    <property type="method" value="X-ray"/>
    <property type="resolution" value="2.70 A"/>
    <property type="chains" value="A=264-352"/>
</dbReference>
<dbReference type="PDB" id="1YJE">
    <property type="method" value="X-ray"/>
    <property type="resolution" value="2.40 A"/>
    <property type="chains" value="A=354-597"/>
</dbReference>
<dbReference type="PDBsum" id="1CIT"/>
<dbReference type="PDBsum" id="1YJE"/>
<dbReference type="SMR" id="P22829"/>
<dbReference type="FunCoup" id="P22829">
    <property type="interactions" value="386"/>
</dbReference>
<dbReference type="IntAct" id="P22829">
    <property type="interactions" value="2"/>
</dbReference>
<dbReference type="MINT" id="P22829"/>
<dbReference type="STRING" id="10116.ENSRNOP00000010171"/>
<dbReference type="GlyGen" id="P22829">
    <property type="glycosylation" value="1 site"/>
</dbReference>
<dbReference type="iPTMnet" id="P22829"/>
<dbReference type="PhosphoSitePlus" id="P22829"/>
<dbReference type="PaxDb" id="10116-ENSRNOP00000010171"/>
<dbReference type="Ensembl" id="ENSRNOT00000010171.5">
    <property type="protein sequence ID" value="ENSRNOP00000010171.2"/>
    <property type="gene ID" value="ENSRNOG00000007607.5"/>
</dbReference>
<dbReference type="GeneID" id="79240"/>
<dbReference type="KEGG" id="rno:79240"/>
<dbReference type="AGR" id="RGD:620029"/>
<dbReference type="CTD" id="3164"/>
<dbReference type="RGD" id="620029">
    <property type="gene designation" value="Nr4a1"/>
</dbReference>
<dbReference type="eggNOG" id="KOG4217">
    <property type="taxonomic scope" value="Eukaryota"/>
</dbReference>
<dbReference type="GeneTree" id="ENSGT00950000183038"/>
<dbReference type="HOGENOM" id="CLU_007368_14_2_1"/>
<dbReference type="InParanoid" id="P22829"/>
<dbReference type="OMA" id="YSCQFTA"/>
<dbReference type="OrthoDB" id="5952118at2759"/>
<dbReference type="PhylomeDB" id="P22829"/>
<dbReference type="TreeFam" id="TF315430"/>
<dbReference type="Reactome" id="R-RNO-198693">
    <property type="pathway name" value="AKT phosphorylates targets in the nucleus"/>
</dbReference>
<dbReference type="Reactome" id="R-RNO-383280">
    <property type="pathway name" value="Nuclear Receptor transcription pathway"/>
</dbReference>
<dbReference type="EvolutionaryTrace" id="P22829"/>
<dbReference type="PRO" id="PR:P22829"/>
<dbReference type="Proteomes" id="UP000002494">
    <property type="component" value="Chromosome 7"/>
</dbReference>
<dbReference type="Bgee" id="ENSRNOG00000007607">
    <property type="expression patterns" value="Expressed in skeletal muscle tissue and 19 other cell types or tissues"/>
</dbReference>
<dbReference type="ExpressionAtlas" id="P22829">
    <property type="expression patterns" value="baseline and differential"/>
</dbReference>
<dbReference type="GO" id="GO:0000785">
    <property type="term" value="C:chromatin"/>
    <property type="evidence" value="ECO:0000250"/>
    <property type="project" value="UniProtKB"/>
</dbReference>
<dbReference type="GO" id="GO:0005829">
    <property type="term" value="C:cytosol"/>
    <property type="evidence" value="ECO:0000250"/>
    <property type="project" value="UniProtKB"/>
</dbReference>
<dbReference type="GO" id="GO:0005739">
    <property type="term" value="C:mitochondrion"/>
    <property type="evidence" value="ECO:0000250"/>
    <property type="project" value="UniProtKB"/>
</dbReference>
<dbReference type="GO" id="GO:0005634">
    <property type="term" value="C:nucleus"/>
    <property type="evidence" value="ECO:0000250"/>
    <property type="project" value="UniProtKB"/>
</dbReference>
<dbReference type="GO" id="GO:0098793">
    <property type="term" value="C:presynapse"/>
    <property type="evidence" value="ECO:0007669"/>
    <property type="project" value="GOC"/>
</dbReference>
<dbReference type="GO" id="GO:0005667">
    <property type="term" value="C:transcription regulator complex"/>
    <property type="evidence" value="ECO:0000266"/>
    <property type="project" value="RGD"/>
</dbReference>
<dbReference type="GO" id="GO:0003677">
    <property type="term" value="F:DNA binding"/>
    <property type="evidence" value="ECO:0000266"/>
    <property type="project" value="RGD"/>
</dbReference>
<dbReference type="GO" id="GO:0001228">
    <property type="term" value="F:DNA-binding transcription activator activity, RNA polymerase II-specific"/>
    <property type="evidence" value="ECO:0000314"/>
    <property type="project" value="UniProtKB"/>
</dbReference>
<dbReference type="GO" id="GO:0000981">
    <property type="term" value="F:DNA-binding transcription factor activity, RNA polymerase II-specific"/>
    <property type="evidence" value="ECO:0000266"/>
    <property type="project" value="RGD"/>
</dbReference>
<dbReference type="GO" id="GO:0003690">
    <property type="term" value="F:double-stranded DNA binding"/>
    <property type="evidence" value="ECO:0000250"/>
    <property type="project" value="UniProtKB"/>
</dbReference>
<dbReference type="GO" id="GO:0042802">
    <property type="term" value="F:identical protein binding"/>
    <property type="evidence" value="ECO:0000266"/>
    <property type="project" value="RGD"/>
</dbReference>
<dbReference type="GO" id="GO:0001530">
    <property type="term" value="F:lipopolysaccharide binding"/>
    <property type="evidence" value="ECO:0000250"/>
    <property type="project" value="UniProtKB"/>
</dbReference>
<dbReference type="GO" id="GO:0035259">
    <property type="term" value="F:nuclear glucocorticoid receptor binding"/>
    <property type="evidence" value="ECO:0000353"/>
    <property type="project" value="UniProtKB"/>
</dbReference>
<dbReference type="GO" id="GO:0004879">
    <property type="term" value="F:nuclear receptor activity"/>
    <property type="evidence" value="ECO:0007669"/>
    <property type="project" value="InterPro"/>
</dbReference>
<dbReference type="GO" id="GO:0046982">
    <property type="term" value="F:protein heterodimerization activity"/>
    <property type="evidence" value="ECO:0000314"/>
    <property type="project" value="UniProtKB"/>
</dbReference>
<dbReference type="GO" id="GO:0000978">
    <property type="term" value="F:RNA polymerase II cis-regulatory region sequence-specific DNA binding"/>
    <property type="evidence" value="ECO:0000318"/>
    <property type="project" value="GO_Central"/>
</dbReference>
<dbReference type="GO" id="GO:0043565">
    <property type="term" value="F:sequence-specific DNA binding"/>
    <property type="evidence" value="ECO:0000266"/>
    <property type="project" value="RGD"/>
</dbReference>
<dbReference type="GO" id="GO:1990837">
    <property type="term" value="F:sequence-specific double-stranded DNA binding"/>
    <property type="evidence" value="ECO:0000266"/>
    <property type="project" value="RGD"/>
</dbReference>
<dbReference type="GO" id="GO:0008134">
    <property type="term" value="F:transcription factor binding"/>
    <property type="evidence" value="ECO:0000353"/>
    <property type="project" value="UniProtKB"/>
</dbReference>
<dbReference type="GO" id="GO:0008270">
    <property type="term" value="F:zinc ion binding"/>
    <property type="evidence" value="ECO:0007669"/>
    <property type="project" value="UniProtKB-KW"/>
</dbReference>
<dbReference type="GO" id="GO:0006915">
    <property type="term" value="P:apoptotic process"/>
    <property type="evidence" value="ECO:0000266"/>
    <property type="project" value="RGD"/>
</dbReference>
<dbReference type="GO" id="GO:0002042">
    <property type="term" value="P:cell migration involved in sprouting angiogenesis"/>
    <property type="evidence" value="ECO:0000266"/>
    <property type="project" value="RGD"/>
</dbReference>
<dbReference type="GO" id="GO:0071376">
    <property type="term" value="P:cellular response to corticotropin-releasing hormone stimulus"/>
    <property type="evidence" value="ECO:0000250"/>
    <property type="project" value="UniProtKB"/>
</dbReference>
<dbReference type="GO" id="GO:0044344">
    <property type="term" value="P:cellular response to fibroblast growth factor stimulus"/>
    <property type="evidence" value="ECO:0000266"/>
    <property type="project" value="RGD"/>
</dbReference>
<dbReference type="GO" id="GO:0035924">
    <property type="term" value="P:cellular response to vascular endothelial growth factor stimulus"/>
    <property type="evidence" value="ECO:0000266"/>
    <property type="project" value="RGD"/>
</dbReference>
<dbReference type="GO" id="GO:0032497">
    <property type="term" value="P:detection of lipopolysaccharide"/>
    <property type="evidence" value="ECO:0000250"/>
    <property type="project" value="UniProtKB"/>
</dbReference>
<dbReference type="GO" id="GO:0035767">
    <property type="term" value="P:endothelial cell chemotaxis"/>
    <property type="evidence" value="ECO:0000266"/>
    <property type="project" value="RGD"/>
</dbReference>
<dbReference type="GO" id="GO:0045444">
    <property type="term" value="P:fat cell differentiation"/>
    <property type="evidence" value="ECO:0000250"/>
    <property type="project" value="UniProtKB"/>
</dbReference>
<dbReference type="GO" id="GO:0006954">
    <property type="term" value="P:inflammatory response"/>
    <property type="evidence" value="ECO:0007669"/>
    <property type="project" value="UniProtKB-KW"/>
</dbReference>
<dbReference type="GO" id="GO:0045786">
    <property type="term" value="P:negative regulation of cell cycle"/>
    <property type="evidence" value="ECO:0000250"/>
    <property type="project" value="UniProtKB"/>
</dbReference>
<dbReference type="GO" id="GO:0014860">
    <property type="term" value="P:neurotransmitter secretion involved in regulation of skeletal muscle contraction"/>
    <property type="evidence" value="ECO:0000315"/>
    <property type="project" value="RGD"/>
</dbReference>
<dbReference type="GO" id="GO:0160075">
    <property type="term" value="P:non-canonical inflammasome complex assembly"/>
    <property type="evidence" value="ECO:0000250"/>
    <property type="project" value="UniProtKB"/>
</dbReference>
<dbReference type="GO" id="GO:0043065">
    <property type="term" value="P:positive regulation of apoptotic process"/>
    <property type="evidence" value="ECO:0000266"/>
    <property type="project" value="RGD"/>
</dbReference>
<dbReference type="GO" id="GO:0045893">
    <property type="term" value="P:positive regulation of DNA-templated transcription"/>
    <property type="evidence" value="ECO:0000266"/>
    <property type="project" value="RGD"/>
</dbReference>
<dbReference type="GO" id="GO:0001938">
    <property type="term" value="P:positive regulation of endothelial cell proliferation"/>
    <property type="evidence" value="ECO:0000266"/>
    <property type="project" value="RGD"/>
</dbReference>
<dbReference type="GO" id="GO:0045944">
    <property type="term" value="P:positive regulation of transcription by RNA polymerase II"/>
    <property type="evidence" value="ECO:0000314"/>
    <property type="project" value="UniProtKB"/>
</dbReference>
<dbReference type="GO" id="GO:0006357">
    <property type="term" value="P:regulation of transcription by RNA polymerase II"/>
    <property type="evidence" value="ECO:0000318"/>
    <property type="project" value="GO_Central"/>
</dbReference>
<dbReference type="GO" id="GO:0061469">
    <property type="term" value="P:regulation of type B pancreatic cell proliferation"/>
    <property type="evidence" value="ECO:0000315"/>
    <property type="project" value="UniProtKB"/>
</dbReference>
<dbReference type="GO" id="GO:0001975">
    <property type="term" value="P:response to amphetamine"/>
    <property type="evidence" value="ECO:0000315"/>
    <property type="project" value="RGD"/>
</dbReference>
<dbReference type="GO" id="GO:0051602">
    <property type="term" value="P:response to electrical stimulus"/>
    <property type="evidence" value="ECO:0000270"/>
    <property type="project" value="RGD"/>
</dbReference>
<dbReference type="GO" id="GO:0032496">
    <property type="term" value="P:response to lipopolysaccharide"/>
    <property type="evidence" value="ECO:0000270"/>
    <property type="project" value="RGD"/>
</dbReference>
<dbReference type="GO" id="GO:0035914">
    <property type="term" value="P:skeletal muscle cell differentiation"/>
    <property type="evidence" value="ECO:0000266"/>
    <property type="project" value="RGD"/>
</dbReference>
<dbReference type="GO" id="GO:0006366">
    <property type="term" value="P:transcription by RNA polymerase II"/>
    <property type="evidence" value="ECO:0000266"/>
    <property type="project" value="RGD"/>
</dbReference>
<dbReference type="CDD" id="cd06969">
    <property type="entry name" value="NR_DBD_NGFI-B"/>
    <property type="match status" value="1"/>
</dbReference>
<dbReference type="CDD" id="cd07348">
    <property type="entry name" value="NR_LBD_NGFI-B"/>
    <property type="match status" value="1"/>
</dbReference>
<dbReference type="FunFam" id="1.10.565.10:FF:000008">
    <property type="entry name" value="Nuclear receptor subfamily 4 group A member 1"/>
    <property type="match status" value="1"/>
</dbReference>
<dbReference type="FunFam" id="3.30.50.10:FF:000009">
    <property type="entry name" value="nuclear receptor subfamily 4 group A member 2"/>
    <property type="match status" value="1"/>
</dbReference>
<dbReference type="Gene3D" id="3.30.50.10">
    <property type="entry name" value="Erythroid Transcription Factor GATA-1, subunit A"/>
    <property type="match status" value="1"/>
</dbReference>
<dbReference type="Gene3D" id="1.10.565.10">
    <property type="entry name" value="Retinoid X Receptor"/>
    <property type="match status" value="1"/>
</dbReference>
<dbReference type="InterPro" id="IPR035500">
    <property type="entry name" value="NHR-like_dom_sf"/>
</dbReference>
<dbReference type="InterPro" id="IPR003071">
    <property type="entry name" value="NR4A1"/>
</dbReference>
<dbReference type="InterPro" id="IPR003070">
    <property type="entry name" value="NR4A1-3"/>
</dbReference>
<dbReference type="InterPro" id="IPR000536">
    <property type="entry name" value="Nucl_hrmn_rcpt_lig-bd"/>
</dbReference>
<dbReference type="InterPro" id="IPR001723">
    <property type="entry name" value="Nuclear_hrmn_rcpt"/>
</dbReference>
<dbReference type="InterPro" id="IPR001628">
    <property type="entry name" value="Znf_hrmn_rcpt"/>
</dbReference>
<dbReference type="InterPro" id="IPR013088">
    <property type="entry name" value="Znf_NHR/GATA"/>
</dbReference>
<dbReference type="PANTHER" id="PTHR24085">
    <property type="entry name" value="NUCLEAR HORMONE RECEPTOR"/>
    <property type="match status" value="1"/>
</dbReference>
<dbReference type="PANTHER" id="PTHR24085:SF1">
    <property type="entry name" value="NUCLEAR RECEPTOR SUBFAMILY 4 GROUP A MEMBER 1"/>
    <property type="match status" value="1"/>
</dbReference>
<dbReference type="Pfam" id="PF00104">
    <property type="entry name" value="Hormone_recep"/>
    <property type="match status" value="1"/>
</dbReference>
<dbReference type="Pfam" id="PF00105">
    <property type="entry name" value="zf-C4"/>
    <property type="match status" value="1"/>
</dbReference>
<dbReference type="PRINTS" id="PR01285">
    <property type="entry name" value="HMRNUCRECPTR"/>
</dbReference>
<dbReference type="PRINTS" id="PR01284">
    <property type="entry name" value="NUCLEARECPTR"/>
</dbReference>
<dbReference type="PRINTS" id="PR00398">
    <property type="entry name" value="STRDHORMONER"/>
</dbReference>
<dbReference type="PRINTS" id="PR00047">
    <property type="entry name" value="STROIDFINGER"/>
</dbReference>
<dbReference type="SMART" id="SM00430">
    <property type="entry name" value="HOLI"/>
    <property type="match status" value="1"/>
</dbReference>
<dbReference type="SMART" id="SM00399">
    <property type="entry name" value="ZnF_C4"/>
    <property type="match status" value="1"/>
</dbReference>
<dbReference type="SUPFAM" id="SSF57716">
    <property type="entry name" value="Glucocorticoid receptor-like (DNA-binding domain)"/>
    <property type="match status" value="1"/>
</dbReference>
<dbReference type="SUPFAM" id="SSF48508">
    <property type="entry name" value="Nuclear receptor ligand-binding domain"/>
    <property type="match status" value="1"/>
</dbReference>
<dbReference type="PROSITE" id="PS51843">
    <property type="entry name" value="NR_LBD"/>
    <property type="match status" value="1"/>
</dbReference>
<dbReference type="PROSITE" id="PS00031">
    <property type="entry name" value="NUCLEAR_REC_DBD_1"/>
    <property type="match status" value="1"/>
</dbReference>
<dbReference type="PROSITE" id="PS51030">
    <property type="entry name" value="NUCLEAR_REC_DBD_2"/>
    <property type="match status" value="1"/>
</dbReference>
<reference key="1">
    <citation type="journal article" date="1988" name="Neuron">
        <title>Nerve growth factor induces a gene homologous to the glucocorticoid receptor gene.</title>
        <authorList>
            <person name="Milbrandt J."/>
        </authorList>
    </citation>
    <scope>NUCLEOTIDE SEQUENCE [MRNA]</scope>
</reference>
<reference key="2">
    <citation type="journal article" date="2004" name="Genome Res.">
        <title>The status, quality, and expansion of the NIH full-length cDNA project: the Mammalian Gene Collection (MGC).</title>
        <authorList>
            <consortium name="The MGC Project Team"/>
        </authorList>
    </citation>
    <scope>NUCLEOTIDE SEQUENCE [LARGE SCALE MRNA]</scope>
    <source>
        <tissue>Placenta</tissue>
    </source>
</reference>
<reference key="3">
    <citation type="journal article" date="1993" name="Mol. Cell. Biol.">
        <title>The orphan receptors NGFI-B and steroidogenic factor 1 establish monomer binding as a third paradigm of nuclear receptor-DNA interaction.</title>
        <authorList>
            <person name="Wilson T.E."/>
            <person name="Fahrner T.J."/>
            <person name="Milbrandt J."/>
        </authorList>
    </citation>
    <scope>CHARACTERIZATION</scope>
</reference>
<reference key="4">
    <citation type="journal article" date="1992" name="Science">
        <title>Participation of non-zinc finger residues in DNA binding by two nuclear orphan receptors.</title>
        <authorList>
            <person name="Wilson T.E."/>
            <person name="Paulsen R.E."/>
            <person name="Padgett K.A."/>
            <person name="Milbrandt J."/>
        </authorList>
    </citation>
    <scope>DNA-BINDING REGION</scope>
</reference>
<reference key="5">
    <citation type="journal article" date="1993" name="J. Biol. Chem.">
        <title>RNR-1, a nuclear receptor in the NGFI-B/Nur77 family that is rapidly induced in regenerating liver.</title>
        <authorList>
            <person name="Scearce L.M."/>
            <person name="Laz T.M."/>
            <person name="Hazel T.G."/>
            <person name="Lau L.F."/>
            <person name="Taub R."/>
        </authorList>
    </citation>
    <scope>FUNCTION</scope>
</reference>
<reference key="6">
    <citation type="journal article" date="1993" name="J. Biol. Chem.">
        <title>The phosphorylation and DNA binding of the DNA-binding domain of the orphan nuclear receptor NGFI-B.</title>
        <authorList>
            <person name="Hirata Y."/>
            <person name="Kiuchi K."/>
            <person name="Chen H.-C."/>
            <person name="Milbrandt J."/>
            <person name="Guroff G."/>
        </authorList>
    </citation>
    <scope>PHOSPHORYLATION AT SER-340 AND SER-350</scope>
    <scope>SUBCELLULAR LOCATION</scope>
    <scope>MUTAGENESIS</scope>
</reference>
<reference evidence="12" key="7">
    <citation type="journal article" date="1999" name="Nat. Struct. Biol.">
        <title>DNA-binding mechanism of the monomeric orphan nuclear receptor NGFI-B.</title>
        <authorList>
            <person name="Meinke G."/>
            <person name="Sigler P.B."/>
        </authorList>
    </citation>
    <scope>X-RAY CRYSTALLOGRAPHY (2.7 ANGSTROMS) OF 264-351 IN COMPLEX WITH NBRE</scope>
    <scope>COFACTOR</scope>
</reference>
<reference evidence="13" key="8">
    <citation type="journal article" date="2005" name="J. Biol. Chem.">
        <title>Structural basis for the cell-specific activities of the NGFI-B and the Nurr1 ligand-binding domain.</title>
        <authorList>
            <person name="Flaig R."/>
            <person name="Greschik H."/>
            <person name="Peluso-Iltis C."/>
            <person name="Moras D."/>
        </authorList>
    </citation>
    <scope>X-RAY CRYSTALLOGRAPHY (2.40 ANGSTROMS) OF 354-597</scope>
</reference>
<accession>P22829</accession>
<accession>Q4V8M4</accession>
<comment type="function">
    <text evidence="2 3 7 9">Orphan nuclear receptor. Binds the NGFI-B response element (NBRE) 5'-AAAGGTCA-3' (PubMed:10331876). Binds 9-cis-retinoic acid outside of its ligand-binding (NR LBD) domain (By similarity). Participates in energy homeostasis by sequestrating the kinase STK11 in the nucleus, thereby attenuating cytoplasmic AMPK activation (By similarity). Regulates the inflammatory response in macrophages by regulating metabolic adaptations during inflammation, including repressing the transcription of genes involved in the citric acid cycle (TCA) (By similarity). Inhibits NF-kappa-B signaling by binding to low-affinity NF-kappa-B binding sites, such as at the IL2 promoter (By similarity). May act concomitantly with NR4A2 in regulating the expression of delayed-early genes during liver regeneration (PubMed:8473329). Plays a role in the vascular response to injury (By similarity).</text>
</comment>
<comment type="function">
    <text evidence="2">In the cytosol, upon its detection of both bacterial lipopolysaccharide (LPS) and NBRE-containing mitochondrial DNA released by GSDMD pores during pyroptosis, it promotes non-canonical NLRP3 inflammasome activation by stimulating association of NLRP3 and NEK7.</text>
</comment>
<comment type="cofactor">
    <cofactor evidence="7">
        <name>Zn(2+)</name>
        <dbReference type="ChEBI" id="CHEBI:29105"/>
    </cofactor>
    <text evidence="7">Binds 2 zinc ions.</text>
</comment>
<comment type="subunit">
    <text evidence="2 3 7">Binds the NGFI-B response element (NBRE) as a monomer (PubMed:10331876). Binds the Nur response element (NurRE), consisting of two inverse NBRE-related octanucleotide repeats separated by 6 base-pairs, as a dimer (By similarity). Interacts (via N-terminus) with NLRP3 (via LRR repeat domain); the interaction is direct, requires binding of NR4A1/Nur77 to NBRE-containing dsDNA and lipopolysaccharide, and leads to non-canonical NLRP3 inflammasome activation (By similarity). Interacts with GADD45GIP1. Interacts with STK11 (By similarity). Interacts with IFI27 (By similarity). Heterodimer (via DNA-binding domain) with RXRA (via C-terminus); DNA-binding of the heterodimer is enhanced by 9-cis retinoic acid (By similarity). Competes for the RXRA interaction with EP300 and thereby attenuates EP300 mediated acetylation of RXRA (By similarity). Interacts with NCOA1 (By similarity). Interacts with NCOA2 (By similarity). Interacts with NCOA3 (By similarity).</text>
</comment>
<comment type="subcellular location">
    <subcellularLocation>
        <location evidence="11">Nucleus</location>
    </subcellularLocation>
    <subcellularLocation>
        <location evidence="3">Cytoplasm</location>
        <location evidence="3">Cytosol</location>
    </subcellularLocation>
    <subcellularLocation>
        <location evidence="3">Mitochondrion</location>
    </subcellularLocation>
    <text evidence="3">Nuclear export to the cytosol is XPO1-mediated and positively regulated by IFI27. Translocation to the mitochondrion upon interaction with RXRA and upon the presence of 9-cis retinoic acid (By similarity).</text>
</comment>
<comment type="tissue specificity">
    <text>Expressed in lung, brain and superior cervical ganglia. High levels are seen in the adrenal tissue.</text>
</comment>
<comment type="induction">
    <text>By nerve growth factor and during liver regeneration.</text>
</comment>
<comment type="domain">
    <text evidence="2">The NR LBD domain binds the lipid A moiety of lipopolysaccharide (LPS) in the cytosol.</text>
</comment>
<comment type="PTM">
    <text evidence="1 8">Phosphorylated at Ser-350 by RPS6KA1 and RPS6KA3 in response to mitogenic or stress stimuli (By similarity). Phosphorylation of Ser-350 results in decrease in NBRE binding while phosphorylation of Ser-340 has little effect on it.</text>
</comment>
<comment type="PTM">
    <text evidence="1">Acetylated by p300/CBP, acetylation increases stability. Deacetylated by HDAC1 (By similarity).</text>
</comment>
<comment type="similarity">
    <text evidence="10">Belongs to the nuclear hormone receptor family. NR4 subfamily.</text>
</comment>
<comment type="sequence caution" evidence="10">
    <conflict type="erroneous initiation">
        <sequence resource="EMBL-CDS" id="AAA56770"/>
    </conflict>
</comment>
<comment type="sequence caution" evidence="10">
    <conflict type="erroneous initiation">
        <sequence resource="EMBL-CDS" id="AAH97313"/>
    </conflict>
</comment>
<name>NR4A1_RAT</name>
<keyword id="KW-0002">3D-structure</keyword>
<keyword id="KW-0007">Acetylation</keyword>
<keyword id="KW-0963">Cytoplasm</keyword>
<keyword id="KW-0238">DNA-binding</keyword>
<keyword id="KW-0395">Inflammatory response</keyword>
<keyword id="KW-0479">Metal-binding</keyword>
<keyword id="KW-0496">Mitochondrion</keyword>
<keyword id="KW-0539">Nucleus</keyword>
<keyword id="KW-0597">Phosphoprotein</keyword>
<keyword id="KW-0675">Receptor</keyword>
<keyword id="KW-1185">Reference proteome</keyword>
<keyword id="KW-0804">Transcription</keyword>
<keyword id="KW-0805">Transcription regulation</keyword>
<keyword id="KW-0862">Zinc</keyword>
<keyword id="KW-0863">Zinc-finger</keyword>
<evidence type="ECO:0000250" key="1"/>
<evidence type="ECO:0000250" key="2">
    <source>
        <dbReference type="UniProtKB" id="P12813"/>
    </source>
</evidence>
<evidence type="ECO:0000250" key="3">
    <source>
        <dbReference type="UniProtKB" id="P22736"/>
    </source>
</evidence>
<evidence type="ECO:0000255" key="4">
    <source>
        <dbReference type="PROSITE-ProRule" id="PRU00407"/>
    </source>
</evidence>
<evidence type="ECO:0000255" key="5">
    <source>
        <dbReference type="PROSITE-ProRule" id="PRU01189"/>
    </source>
</evidence>
<evidence type="ECO:0000256" key="6">
    <source>
        <dbReference type="SAM" id="MobiDB-lite"/>
    </source>
</evidence>
<evidence type="ECO:0000269" key="7">
    <source>
    </source>
</evidence>
<evidence type="ECO:0000269" key="8">
    <source>
    </source>
</evidence>
<evidence type="ECO:0000269" key="9">
    <source>
    </source>
</evidence>
<evidence type="ECO:0000305" key="10"/>
<evidence type="ECO:0000305" key="11">
    <source>
    </source>
</evidence>
<evidence type="ECO:0007744" key="12">
    <source>
        <dbReference type="PDB" id="1CIT"/>
    </source>
</evidence>
<evidence type="ECO:0007744" key="13">
    <source>
        <dbReference type="PDB" id="1YJE"/>
    </source>
</evidence>
<evidence type="ECO:0007829" key="14">
    <source>
        <dbReference type="PDB" id="1CIT"/>
    </source>
</evidence>
<evidence type="ECO:0007829" key="15">
    <source>
        <dbReference type="PDB" id="1YJE"/>
    </source>
</evidence>
<protein>
    <recommendedName>
        <fullName>Nuclear receptor subfamily 4 group A member 1</fullName>
    </recommendedName>
    <alternativeName>
        <fullName>NUR77</fullName>
    </alternativeName>
    <alternativeName>
        <fullName>Nerve growth factor-induced protein I-B</fullName>
        <shortName>NGFI-B</shortName>
    </alternativeName>
    <alternativeName>
        <fullName>Orphan nuclear receptor HMR</fullName>
    </alternativeName>
</protein>